<comment type="function">
    <text evidence="1">Cell wall formation. Catalyzes the transfer of a GlcNAc subunit on undecaprenyl-pyrophosphoryl-MurNAc-pentapeptide (lipid intermediate I) to form undecaprenyl-pyrophosphoryl-MurNAc-(pentapeptide)GlcNAc (lipid intermediate II).</text>
</comment>
<comment type="catalytic activity">
    <reaction evidence="1">
        <text>Mur2Ac(oyl-L-Ala-gamma-D-Glu-L-Lys-D-Ala-D-Ala)-di-trans,octa-cis-undecaprenyl diphosphate + UDP-N-acetyl-alpha-D-glucosamine = beta-D-GlcNAc-(1-&gt;4)-Mur2Ac(oyl-L-Ala-gamma-D-Glu-L-Lys-D-Ala-D-Ala)-di-trans,octa-cis-undecaprenyl diphosphate + UDP + H(+)</text>
        <dbReference type="Rhea" id="RHEA:23192"/>
        <dbReference type="ChEBI" id="CHEBI:15378"/>
        <dbReference type="ChEBI" id="CHEBI:57705"/>
        <dbReference type="ChEBI" id="CHEBI:58223"/>
        <dbReference type="ChEBI" id="CHEBI:60032"/>
        <dbReference type="ChEBI" id="CHEBI:60033"/>
        <dbReference type="EC" id="2.4.1.227"/>
    </reaction>
</comment>
<comment type="pathway">
    <text evidence="1">Cell wall biogenesis; peptidoglycan biosynthesis.</text>
</comment>
<comment type="subcellular location">
    <subcellularLocation>
        <location evidence="1">Cell membrane</location>
        <topology evidence="1">Peripheral membrane protein</topology>
        <orientation evidence="1">Cytoplasmic side</orientation>
    </subcellularLocation>
</comment>
<comment type="similarity">
    <text evidence="1">Belongs to the glycosyltransferase 28 family. MurG subfamily.</text>
</comment>
<evidence type="ECO:0000255" key="1">
    <source>
        <dbReference type="HAMAP-Rule" id="MF_00033"/>
    </source>
</evidence>
<reference key="1">
    <citation type="journal article" date="2004" name="Nat. Biotechnol.">
        <title>Complete sequence and comparative genome analysis of the dairy bacterium Streptococcus thermophilus.</title>
        <authorList>
            <person name="Bolotin A."/>
            <person name="Quinquis B."/>
            <person name="Renault P."/>
            <person name="Sorokin A."/>
            <person name="Ehrlich S.D."/>
            <person name="Kulakauskas S."/>
            <person name="Lapidus A."/>
            <person name="Goltsman E."/>
            <person name="Mazur M."/>
            <person name="Pusch G.D."/>
            <person name="Fonstein M."/>
            <person name="Overbeek R."/>
            <person name="Kyprides N."/>
            <person name="Purnelle B."/>
            <person name="Prozzi D."/>
            <person name="Ngui K."/>
            <person name="Masuy D."/>
            <person name="Hancy F."/>
            <person name="Burteau S."/>
            <person name="Boutry M."/>
            <person name="Delcour J."/>
            <person name="Goffeau A."/>
            <person name="Hols P."/>
        </authorList>
    </citation>
    <scope>NUCLEOTIDE SEQUENCE [LARGE SCALE GENOMIC DNA]</scope>
    <source>
        <strain>ATCC BAA-250 / LMG 18311</strain>
    </source>
</reference>
<dbReference type="EC" id="2.4.1.227" evidence="1"/>
<dbReference type="EMBL" id="CP000023">
    <property type="protein sequence ID" value="AAV60425.1"/>
    <property type="molecule type" value="Genomic_DNA"/>
</dbReference>
<dbReference type="RefSeq" id="WP_011225775.1">
    <property type="nucleotide sequence ID" value="NC_006448.1"/>
</dbReference>
<dbReference type="SMR" id="Q5M4Y1"/>
<dbReference type="STRING" id="264199.stu0732"/>
<dbReference type="CAZy" id="GT28">
    <property type="family name" value="Glycosyltransferase Family 28"/>
</dbReference>
<dbReference type="KEGG" id="stl:stu0732"/>
<dbReference type="eggNOG" id="COG0707">
    <property type="taxonomic scope" value="Bacteria"/>
</dbReference>
<dbReference type="HOGENOM" id="CLU_037404_0_0_9"/>
<dbReference type="UniPathway" id="UPA00219"/>
<dbReference type="Proteomes" id="UP000001170">
    <property type="component" value="Chromosome"/>
</dbReference>
<dbReference type="GO" id="GO:0005886">
    <property type="term" value="C:plasma membrane"/>
    <property type="evidence" value="ECO:0007669"/>
    <property type="project" value="UniProtKB-SubCell"/>
</dbReference>
<dbReference type="GO" id="GO:0050511">
    <property type="term" value="F:undecaprenyldiphospho-muramoylpentapeptide beta-N-acetylglucosaminyltransferase activity"/>
    <property type="evidence" value="ECO:0007669"/>
    <property type="project" value="UniProtKB-UniRule"/>
</dbReference>
<dbReference type="GO" id="GO:0005975">
    <property type="term" value="P:carbohydrate metabolic process"/>
    <property type="evidence" value="ECO:0007669"/>
    <property type="project" value="InterPro"/>
</dbReference>
<dbReference type="GO" id="GO:0051301">
    <property type="term" value="P:cell division"/>
    <property type="evidence" value="ECO:0007669"/>
    <property type="project" value="UniProtKB-KW"/>
</dbReference>
<dbReference type="GO" id="GO:0071555">
    <property type="term" value="P:cell wall organization"/>
    <property type="evidence" value="ECO:0007669"/>
    <property type="project" value="UniProtKB-KW"/>
</dbReference>
<dbReference type="GO" id="GO:0030259">
    <property type="term" value="P:lipid glycosylation"/>
    <property type="evidence" value="ECO:0007669"/>
    <property type="project" value="UniProtKB-UniRule"/>
</dbReference>
<dbReference type="GO" id="GO:0009252">
    <property type="term" value="P:peptidoglycan biosynthetic process"/>
    <property type="evidence" value="ECO:0007669"/>
    <property type="project" value="UniProtKB-UniRule"/>
</dbReference>
<dbReference type="GO" id="GO:0008360">
    <property type="term" value="P:regulation of cell shape"/>
    <property type="evidence" value="ECO:0007669"/>
    <property type="project" value="UniProtKB-KW"/>
</dbReference>
<dbReference type="CDD" id="cd03785">
    <property type="entry name" value="GT28_MurG"/>
    <property type="match status" value="1"/>
</dbReference>
<dbReference type="Gene3D" id="3.40.50.2000">
    <property type="entry name" value="Glycogen Phosphorylase B"/>
    <property type="match status" value="2"/>
</dbReference>
<dbReference type="HAMAP" id="MF_00033">
    <property type="entry name" value="MurG"/>
    <property type="match status" value="1"/>
</dbReference>
<dbReference type="InterPro" id="IPR006009">
    <property type="entry name" value="GlcNAc_MurG"/>
</dbReference>
<dbReference type="InterPro" id="IPR007235">
    <property type="entry name" value="Glyco_trans_28_C"/>
</dbReference>
<dbReference type="InterPro" id="IPR004276">
    <property type="entry name" value="GlycoTrans_28_N"/>
</dbReference>
<dbReference type="PANTHER" id="PTHR21015:SF27">
    <property type="entry name" value="UDP-N-ACETYLGLUCOSAMINE--N-ACETYLMURAMYL-(PENTAPEPTIDE) PYROPHOSPHORYL-UNDECAPRENOL N-ACETYLGLUCOSAMINE TRANSFERASE"/>
    <property type="match status" value="1"/>
</dbReference>
<dbReference type="PANTHER" id="PTHR21015">
    <property type="entry name" value="UDP-N-ACETYLGLUCOSAMINE--N-ACETYLMURAMYL-(PENTAPEPTIDE) PYROPHOSPHORYL-UNDECAPRENOL N-ACETYLGLUCOSAMINE TRANSFERASE 1"/>
    <property type="match status" value="1"/>
</dbReference>
<dbReference type="Pfam" id="PF04101">
    <property type="entry name" value="Glyco_tran_28_C"/>
    <property type="match status" value="1"/>
</dbReference>
<dbReference type="Pfam" id="PF03033">
    <property type="entry name" value="Glyco_transf_28"/>
    <property type="match status" value="1"/>
</dbReference>
<dbReference type="SUPFAM" id="SSF53756">
    <property type="entry name" value="UDP-Glycosyltransferase/glycogen phosphorylase"/>
    <property type="match status" value="1"/>
</dbReference>
<protein>
    <recommendedName>
        <fullName evidence="1">UDP-N-acetylglucosamine--N-acetylmuramyl-(pentapeptide) pyrophosphoryl-undecaprenol N-acetylglucosamine transferase</fullName>
        <ecNumber evidence="1">2.4.1.227</ecNumber>
    </recommendedName>
    <alternativeName>
        <fullName evidence="1">Undecaprenyl-PP-MurNAc-pentapeptide-UDPGlcNAc GlcNAc transferase</fullName>
    </alternativeName>
</protein>
<proteinExistence type="inferred from homology"/>
<gene>
    <name evidence="1" type="primary">murG</name>
    <name type="ordered locus">stu0732</name>
</gene>
<name>MURG_STRT2</name>
<feature type="chain" id="PRO_0000225103" description="UDP-N-acetylglucosamine--N-acetylmuramyl-(pentapeptide) pyrophosphoryl-undecaprenol N-acetylglucosamine transferase">
    <location>
        <begin position="1"/>
        <end position="356"/>
    </location>
</feature>
<feature type="binding site" evidence="1">
    <location>
        <position position="198"/>
    </location>
    <ligand>
        <name>UDP-N-acetyl-alpha-D-glucosamine</name>
        <dbReference type="ChEBI" id="CHEBI:57705"/>
    </ligand>
</feature>
<feature type="binding site" evidence="1">
    <location>
        <position position="289"/>
    </location>
    <ligand>
        <name>UDP-N-acetyl-alpha-D-glucosamine</name>
        <dbReference type="ChEBI" id="CHEBI:57705"/>
    </ligand>
</feature>
<keyword id="KW-0131">Cell cycle</keyword>
<keyword id="KW-0132">Cell division</keyword>
<keyword id="KW-1003">Cell membrane</keyword>
<keyword id="KW-0133">Cell shape</keyword>
<keyword id="KW-0961">Cell wall biogenesis/degradation</keyword>
<keyword id="KW-0328">Glycosyltransferase</keyword>
<keyword id="KW-0472">Membrane</keyword>
<keyword id="KW-0573">Peptidoglycan synthesis</keyword>
<keyword id="KW-1185">Reference proteome</keyword>
<keyword id="KW-0808">Transferase</keyword>
<accession>Q5M4Y1</accession>
<sequence length="356" mass="40156">MAKSKKIVFTGGGTVGHVTLNLILIPKFLKDGWEVHYIGDKHGVEHEQIDKSGLDVTFHSIATGKLRRYFSWQNMLDVFKVGWGILQSIAIIAKIRPQALFSKGGFVSVPPVIASKLLRVPVYVHESDLSMGLANKIAYKFATTMFTTFEQSKTLVKTRHVGAITKVGMTRFDNSDQLDKIKEQFDEKLKTVLFIGGSAGAKVFNDFISKTPELIENYNIINISGDSSLNTLERHLYRVDYVTDLYQPLMDMADLVVTRGGSNTIFELLAMKKLHLIVPLGKEASRGDQLENADYFERKGYARQLQEPELSWETLKHELEQLVEHAETYKEAMAKSEEITSPDDFYNLLVTSISNK</sequence>
<organism>
    <name type="scientific">Streptococcus thermophilus (strain ATCC BAA-250 / LMG 18311)</name>
    <dbReference type="NCBI Taxonomy" id="264199"/>
    <lineage>
        <taxon>Bacteria</taxon>
        <taxon>Bacillati</taxon>
        <taxon>Bacillota</taxon>
        <taxon>Bacilli</taxon>
        <taxon>Lactobacillales</taxon>
        <taxon>Streptococcaceae</taxon>
        <taxon>Streptococcus</taxon>
    </lineage>
</organism>